<dbReference type="EC" id="3.1.2.22" evidence="9"/>
<dbReference type="EMBL" id="AF357970">
    <property type="protein sequence ID" value="AAL99615.1"/>
    <property type="molecule type" value="mRNA"/>
</dbReference>
<dbReference type="EMBL" id="AF331918">
    <property type="protein sequence ID" value="AAQ14875.1"/>
    <property type="molecule type" value="Genomic_DNA"/>
</dbReference>
<dbReference type="EMBL" id="AK074389">
    <property type="protein sequence ID" value="BAB85068.1"/>
    <property type="status" value="ALT_INIT"/>
    <property type="molecule type" value="mRNA"/>
</dbReference>
<dbReference type="EMBL" id="AK289713">
    <property type="protein sequence ID" value="BAF82402.1"/>
    <property type="molecule type" value="mRNA"/>
</dbReference>
<dbReference type="EMBL" id="AK290092">
    <property type="protein sequence ID" value="BAF82781.1"/>
    <property type="molecule type" value="mRNA"/>
</dbReference>
<dbReference type="EMBL" id="CH471177">
    <property type="protein sequence ID" value="EAW52524.1"/>
    <property type="molecule type" value="Genomic_DNA"/>
</dbReference>
<dbReference type="EMBL" id="BC029104">
    <property type="protein sequence ID" value="AAH29104.1"/>
    <property type="molecule type" value="mRNA"/>
</dbReference>
<dbReference type="EMBL" id="AL831876">
    <property type="protein sequence ID" value="CAD38561.2"/>
    <property type="status" value="ALT_INIT"/>
    <property type="molecule type" value="mRNA"/>
</dbReference>
<dbReference type="CCDS" id="CCDS12779.1">
    <molecule id="Q8TCG5-1"/>
</dbReference>
<dbReference type="CCDS" id="CCDS46147.1">
    <molecule id="Q8TCG5-2"/>
</dbReference>
<dbReference type="RefSeq" id="NP_001129524.1">
    <molecule id="Q8TCG5-2"/>
    <property type="nucleotide sequence ID" value="NM_001136052.3"/>
</dbReference>
<dbReference type="RefSeq" id="NP_001186681.1">
    <molecule id="Q8TCG5-1"/>
    <property type="nucleotide sequence ID" value="NM_001199752.3"/>
</dbReference>
<dbReference type="RefSeq" id="NP_001186682.1">
    <molecule id="Q8TCG5-1"/>
    <property type="nucleotide sequence ID" value="NM_001199753.2"/>
</dbReference>
<dbReference type="RefSeq" id="NP_001365412.1">
    <molecule id="Q8TCG5-1"/>
    <property type="nucleotide sequence ID" value="NM_001378483.1"/>
</dbReference>
<dbReference type="RefSeq" id="NP_001365413.1">
    <molecule id="Q8TCG5-1"/>
    <property type="nucleotide sequence ID" value="NM_001378484.1"/>
</dbReference>
<dbReference type="RefSeq" id="NP_001365414.1">
    <molecule id="Q8TCG5-2"/>
    <property type="nucleotide sequence ID" value="NM_001378485.1"/>
</dbReference>
<dbReference type="RefSeq" id="NP_689572.1">
    <molecule id="Q8TCG5-1"/>
    <property type="nucleotide sequence ID" value="NM_152359.3"/>
</dbReference>
<dbReference type="RefSeq" id="XP_005258562.1">
    <property type="nucleotide sequence ID" value="XM_005258505.2"/>
</dbReference>
<dbReference type="RefSeq" id="XP_005258563.1">
    <property type="nucleotide sequence ID" value="XM_005258506.4"/>
</dbReference>
<dbReference type="RefSeq" id="XP_011524740.1">
    <property type="nucleotide sequence ID" value="XM_011526438.2"/>
</dbReference>
<dbReference type="RefSeq" id="XP_011524741.1">
    <property type="nucleotide sequence ID" value="XM_011526439.2"/>
</dbReference>
<dbReference type="RefSeq" id="XP_047294112.1">
    <molecule id="Q8TCG5-1"/>
    <property type="nucleotide sequence ID" value="XM_047438156.1"/>
</dbReference>
<dbReference type="RefSeq" id="XP_047294113.1">
    <molecule id="Q8TCG5-1"/>
    <property type="nucleotide sequence ID" value="XM_047438157.1"/>
</dbReference>
<dbReference type="RefSeq" id="XP_047294114.1">
    <molecule id="Q8TCG5-2"/>
    <property type="nucleotide sequence ID" value="XM_047438158.1"/>
</dbReference>
<dbReference type="RefSeq" id="XP_047294115.1">
    <molecule id="Q8TCG5-2"/>
    <property type="nucleotide sequence ID" value="XM_047438159.1"/>
</dbReference>
<dbReference type="RefSeq" id="XP_054175753.1">
    <molecule id="Q8TCG5-1"/>
    <property type="nucleotide sequence ID" value="XM_054319778.1"/>
</dbReference>
<dbReference type="RefSeq" id="XP_054175754.1">
    <molecule id="Q8TCG5-1"/>
    <property type="nucleotide sequence ID" value="XM_054319779.1"/>
</dbReference>
<dbReference type="RefSeq" id="XP_054175755.1">
    <molecule id="Q8TCG5-2"/>
    <property type="nucleotide sequence ID" value="XM_054319780.1"/>
</dbReference>
<dbReference type="RefSeq" id="XP_054175756.1">
    <molecule id="Q8TCG5-2"/>
    <property type="nucleotide sequence ID" value="XM_054319781.1"/>
</dbReference>
<dbReference type="PDB" id="2M76">
    <property type="method" value="NMR"/>
    <property type="chains" value="A=1-50"/>
</dbReference>
<dbReference type="PDBsum" id="2M76"/>
<dbReference type="BMRB" id="Q8TCG5"/>
<dbReference type="SMR" id="Q8TCG5"/>
<dbReference type="BioGRID" id="125958">
    <property type="interactions" value="7"/>
</dbReference>
<dbReference type="FunCoup" id="Q8TCG5">
    <property type="interactions" value="602"/>
</dbReference>
<dbReference type="IntAct" id="Q8TCG5">
    <property type="interactions" value="1"/>
</dbReference>
<dbReference type="STRING" id="9606.ENSP00000376303"/>
<dbReference type="GlyGen" id="Q8TCG5">
    <property type="glycosylation" value="1 site"/>
</dbReference>
<dbReference type="iPTMnet" id="Q8TCG5"/>
<dbReference type="PhosphoSitePlus" id="Q8TCG5"/>
<dbReference type="SwissPalm" id="Q8TCG5"/>
<dbReference type="BioMuta" id="CPT1C"/>
<dbReference type="DMDM" id="57013809"/>
<dbReference type="jPOST" id="Q8TCG5"/>
<dbReference type="MassIVE" id="Q8TCG5"/>
<dbReference type="PaxDb" id="9606-ENSP00000376303"/>
<dbReference type="PeptideAtlas" id="Q8TCG5"/>
<dbReference type="ProteomicsDB" id="74135">
    <molecule id="Q8TCG5-1"/>
</dbReference>
<dbReference type="ProteomicsDB" id="74136">
    <molecule id="Q8TCG5-2"/>
</dbReference>
<dbReference type="ProteomicsDB" id="74137">
    <molecule id="Q8TCG5-3"/>
</dbReference>
<dbReference type="Antibodypedia" id="3052">
    <property type="antibodies" value="263 antibodies from 32 providers"/>
</dbReference>
<dbReference type="DNASU" id="126129"/>
<dbReference type="Ensembl" id="ENST00000323446.9">
    <molecule id="Q8TCG5-1"/>
    <property type="protein sequence ID" value="ENSP00000319343.4"/>
    <property type="gene ID" value="ENSG00000169169.15"/>
</dbReference>
<dbReference type="Ensembl" id="ENST00000392518.8">
    <molecule id="Q8TCG5-1"/>
    <property type="protein sequence ID" value="ENSP00000376303.4"/>
    <property type="gene ID" value="ENSG00000169169.15"/>
</dbReference>
<dbReference type="Ensembl" id="ENST00000405931.6">
    <molecule id="Q8TCG5-2"/>
    <property type="protein sequence ID" value="ENSP00000384465.2"/>
    <property type="gene ID" value="ENSG00000169169.15"/>
</dbReference>
<dbReference type="Ensembl" id="ENST00000598293.6">
    <molecule id="Q8TCG5-1"/>
    <property type="protein sequence ID" value="ENSP00000473028.1"/>
    <property type="gene ID" value="ENSG00000169169.15"/>
</dbReference>
<dbReference type="GeneID" id="126129"/>
<dbReference type="KEGG" id="hsa:126129"/>
<dbReference type="MANE-Select" id="ENST00000598293.6">
    <property type="protein sequence ID" value="ENSP00000473028.1"/>
    <property type="RefSeq nucleotide sequence ID" value="NM_001199753.2"/>
    <property type="RefSeq protein sequence ID" value="NP_001186682.1"/>
</dbReference>
<dbReference type="UCSC" id="uc002ppj.4">
    <molecule id="Q8TCG5-1"/>
    <property type="organism name" value="human"/>
</dbReference>
<dbReference type="AGR" id="HGNC:18540"/>
<dbReference type="CTD" id="126129"/>
<dbReference type="DisGeNET" id="126129"/>
<dbReference type="GeneCards" id="CPT1C"/>
<dbReference type="HGNC" id="HGNC:18540">
    <property type="gene designation" value="CPT1C"/>
</dbReference>
<dbReference type="HPA" id="ENSG00000169169">
    <property type="expression patterns" value="Tissue enhanced (brain, choroid plexus, pituitary gland)"/>
</dbReference>
<dbReference type="MalaCards" id="CPT1C"/>
<dbReference type="MIM" id="608846">
    <property type="type" value="gene"/>
</dbReference>
<dbReference type="MIM" id="616282">
    <property type="type" value="phenotype"/>
</dbReference>
<dbReference type="neXtProt" id="NX_Q8TCG5"/>
<dbReference type="OpenTargets" id="ENSG00000169169"/>
<dbReference type="Orphanet" id="444099">
    <property type="disease" value="Autosomal dominant spastic paraplegia type 73"/>
</dbReference>
<dbReference type="PharmGKB" id="PA134922321"/>
<dbReference type="VEuPathDB" id="HostDB:ENSG00000169169"/>
<dbReference type="eggNOG" id="KOG3716">
    <property type="taxonomic scope" value="Eukaryota"/>
</dbReference>
<dbReference type="GeneTree" id="ENSGT01130000278324"/>
<dbReference type="HOGENOM" id="CLU_013513_2_1_1"/>
<dbReference type="InParanoid" id="Q8TCG5"/>
<dbReference type="OMA" id="VYSEQWQ"/>
<dbReference type="OrthoDB" id="240216at2759"/>
<dbReference type="PAN-GO" id="Q8TCG5">
    <property type="GO annotations" value="4 GO annotations based on evolutionary models"/>
</dbReference>
<dbReference type="PhylomeDB" id="Q8TCG5"/>
<dbReference type="TreeFam" id="TF313836"/>
<dbReference type="BioCyc" id="MetaCyc:HS09892-MONOMER"/>
<dbReference type="BRENDA" id="2.3.1.21">
    <property type="organism ID" value="2681"/>
</dbReference>
<dbReference type="PathwayCommons" id="Q8TCG5"/>
<dbReference type="SignaLink" id="Q8TCG5"/>
<dbReference type="SIGNOR" id="Q8TCG5"/>
<dbReference type="BioGRID-ORCS" id="126129">
    <property type="hits" value="13 hits in 1154 CRISPR screens"/>
</dbReference>
<dbReference type="ChiTaRS" id="CPT1C">
    <property type="organism name" value="human"/>
</dbReference>
<dbReference type="EvolutionaryTrace" id="Q8TCG5"/>
<dbReference type="GenomeRNAi" id="126129"/>
<dbReference type="Pharos" id="Q8TCG5">
    <property type="development level" value="Tbio"/>
</dbReference>
<dbReference type="PRO" id="PR:Q8TCG5"/>
<dbReference type="Proteomes" id="UP000005640">
    <property type="component" value="Chromosome 19"/>
</dbReference>
<dbReference type="RNAct" id="Q8TCG5">
    <property type="molecule type" value="protein"/>
</dbReference>
<dbReference type="Bgee" id="ENSG00000169169">
    <property type="expression patterns" value="Expressed in right hemisphere of cerebellum and 124 other cell types or tissues"/>
</dbReference>
<dbReference type="ExpressionAtlas" id="Q8TCG5">
    <property type="expression patterns" value="baseline and differential"/>
</dbReference>
<dbReference type="GO" id="GO:0032281">
    <property type="term" value="C:AMPA glutamate receptor complex"/>
    <property type="evidence" value="ECO:0007669"/>
    <property type="project" value="Ensembl"/>
</dbReference>
<dbReference type="GO" id="GO:0030424">
    <property type="term" value="C:axon"/>
    <property type="evidence" value="ECO:0000250"/>
    <property type="project" value="UniProtKB"/>
</dbReference>
<dbReference type="GO" id="GO:0030425">
    <property type="term" value="C:dendrite"/>
    <property type="evidence" value="ECO:0000250"/>
    <property type="project" value="UniProtKB"/>
</dbReference>
<dbReference type="GO" id="GO:0005783">
    <property type="term" value="C:endoplasmic reticulum"/>
    <property type="evidence" value="ECO:0000314"/>
    <property type="project" value="UniProtKB"/>
</dbReference>
<dbReference type="GO" id="GO:0005789">
    <property type="term" value="C:endoplasmic reticulum membrane"/>
    <property type="evidence" value="ECO:0000250"/>
    <property type="project" value="UniProtKB"/>
</dbReference>
<dbReference type="GO" id="GO:0098978">
    <property type="term" value="C:glutamatergic synapse"/>
    <property type="evidence" value="ECO:0007669"/>
    <property type="project" value="Ensembl"/>
</dbReference>
<dbReference type="GO" id="GO:0098794">
    <property type="term" value="C:postsynapse"/>
    <property type="evidence" value="ECO:0007669"/>
    <property type="project" value="Ensembl"/>
</dbReference>
<dbReference type="GO" id="GO:0016746">
    <property type="term" value="F:acyltransferase activity"/>
    <property type="evidence" value="ECO:0007669"/>
    <property type="project" value="UniProtKB-KW"/>
</dbReference>
<dbReference type="GO" id="GO:0008474">
    <property type="term" value="F:palmitoyl-(protein) hydrolase activity"/>
    <property type="evidence" value="ECO:0000314"/>
    <property type="project" value="UniProtKB"/>
</dbReference>
<dbReference type="GO" id="GO:0009437">
    <property type="term" value="P:carnitine metabolic process"/>
    <property type="evidence" value="ECO:0000318"/>
    <property type="project" value="GO_Central"/>
</dbReference>
<dbReference type="GO" id="GO:0006631">
    <property type="term" value="P:fatty acid metabolic process"/>
    <property type="evidence" value="ECO:0000318"/>
    <property type="project" value="GO_Central"/>
</dbReference>
<dbReference type="GO" id="GO:0099072">
    <property type="term" value="P:regulation of postsynaptic membrane neurotransmitter receptor levels"/>
    <property type="evidence" value="ECO:0007669"/>
    <property type="project" value="Ensembl"/>
</dbReference>
<dbReference type="FunFam" id="3.30.559.70:FF:000008">
    <property type="entry name" value="carnitine O-palmitoyltransferase 1, brain isoform"/>
    <property type="match status" value="1"/>
</dbReference>
<dbReference type="FunFam" id="3.30.559.10:FF:000002">
    <property type="entry name" value="carnitine O-palmitoyltransferase 1, liver isoform"/>
    <property type="match status" value="1"/>
</dbReference>
<dbReference type="Gene3D" id="6.10.250.1760">
    <property type="match status" value="1"/>
</dbReference>
<dbReference type="Gene3D" id="3.30.559.10">
    <property type="entry name" value="Chloramphenicol acetyltransferase-like domain"/>
    <property type="match status" value="1"/>
</dbReference>
<dbReference type="Gene3D" id="3.30.559.70">
    <property type="entry name" value="Choline/Carnitine o-acyltransferase, domain 2"/>
    <property type="match status" value="1"/>
</dbReference>
<dbReference type="InterPro" id="IPR000542">
    <property type="entry name" value="Carn_acyl_trans"/>
</dbReference>
<dbReference type="InterPro" id="IPR023213">
    <property type="entry name" value="CAT-like_dom_sf"/>
</dbReference>
<dbReference type="InterPro" id="IPR039551">
    <property type="entry name" value="Cho/carn_acyl_trans"/>
</dbReference>
<dbReference type="InterPro" id="IPR042231">
    <property type="entry name" value="Cho/carn_acyl_trans_2"/>
</dbReference>
<dbReference type="InterPro" id="IPR032476">
    <property type="entry name" value="CPT_N"/>
</dbReference>
<dbReference type="PANTHER" id="PTHR22589">
    <property type="entry name" value="CARNITINE O-ACYLTRANSFERASE"/>
    <property type="match status" value="1"/>
</dbReference>
<dbReference type="PANTHER" id="PTHR22589:SF55">
    <property type="entry name" value="CARNITINE O-PALMITOYLTRANSFERASE 1, BRAIN ISOFORM"/>
    <property type="match status" value="1"/>
</dbReference>
<dbReference type="Pfam" id="PF00755">
    <property type="entry name" value="Carn_acyltransf"/>
    <property type="match status" value="1"/>
</dbReference>
<dbReference type="Pfam" id="PF16484">
    <property type="entry name" value="CPT_N"/>
    <property type="match status" value="1"/>
</dbReference>
<dbReference type="SUPFAM" id="SSF52777">
    <property type="entry name" value="CoA-dependent acyltransferases"/>
    <property type="match status" value="2"/>
</dbReference>
<dbReference type="PROSITE" id="PS00439">
    <property type="entry name" value="ACYLTRANSF_C_1"/>
    <property type="match status" value="1"/>
</dbReference>
<dbReference type="PROSITE" id="PS00440">
    <property type="entry name" value="ACYLTRANSF_C_2"/>
    <property type="match status" value="1"/>
</dbReference>
<name>CPT1C_HUMAN</name>
<protein>
    <recommendedName>
        <fullName evidence="13">Palmitoyl thioesterase CPT1C</fullName>
        <ecNumber evidence="9">3.1.2.22</ecNumber>
    </recommendedName>
    <alternativeName>
        <fullName>Carnitine O-palmitoyltransferase 1, brain isoform</fullName>
        <shortName>CPTI-B</shortName>
    </alternativeName>
    <alternativeName>
        <fullName>Carnitine palmitoyltransferase 1C</fullName>
    </alternativeName>
    <alternativeName>
        <fullName evidence="10">Carnitine palmitoyltransferase I</fullName>
        <shortName evidence="10">CPT I-C</shortName>
    </alternativeName>
</protein>
<comment type="function">
    <text evidence="2 6 8 9">Palmitoyl thioesterase specifically expressed in the endoplasmic reticulum of neurons. Modulates the trafficking of the glutamate receptor, AMPAR, to plasma membrane through depalmitoylation of GRIA1 (PubMed:30135643). Also regulates AMPR trafficking through the regulation of SACM1L phosphatidylinositol-3-phosphatase activity by interaction in a malonyl-CoA dependent manner (By similarity). Binds malonyl-CoA and couples malonyl-CoA to ceramide levels, necessary for proper spine maturation and contributing to systemic energy homeostasis and appetite control (PubMed:16651524). Binds to palmitoyl-CoA, but does not have carnitine palmitoyltransferase 1 catalytic activity or at very low levels (PubMed:25751282, PubMed:30135643).</text>
</comment>
<comment type="catalytic activity">
    <reaction evidence="9">
        <text>S-hexadecanoyl-L-cysteinyl-[protein] + H2O = L-cysteinyl-[protein] + hexadecanoate + H(+)</text>
        <dbReference type="Rhea" id="RHEA:19233"/>
        <dbReference type="Rhea" id="RHEA-COMP:10131"/>
        <dbReference type="Rhea" id="RHEA-COMP:11032"/>
        <dbReference type="ChEBI" id="CHEBI:7896"/>
        <dbReference type="ChEBI" id="CHEBI:15377"/>
        <dbReference type="ChEBI" id="CHEBI:15378"/>
        <dbReference type="ChEBI" id="CHEBI:29950"/>
        <dbReference type="ChEBI" id="CHEBI:74151"/>
        <dbReference type="EC" id="3.1.2.22"/>
    </reaction>
    <physiologicalReaction direction="left-to-right" evidence="9">
        <dbReference type="Rhea" id="RHEA:19234"/>
    </physiologicalReaction>
</comment>
<comment type="subunit">
    <text evidence="2 8 9">Peripherally associated with AMPAR complex. AMPAR complex consists of an inner core made of 4 pore-forming GluA/GRIA proteins (GRIA1, GRIA2, GRIA3 and GRIA4) and 4 major auxiliary subunits arranged in a twofold symmetry. One of the two pairs of distinct binding sites is occupied either by CNIH2, CNIH3 or CACNG2, CACNG3. The other harbors CACNG2, CACNG3, CACNG4, CACNG8 or GSG1L. This inner core of AMPAR complex is complemented by outer core constituents binding directly to the GluA/GRIA proteins at sites distinct from the interaction sites of the inner core constituents. Outer core constituents include at least PRRT1, PRRT2, CKAMP44/SHISA9, FRRS1L and NRN1. The proteins of the inner and outer core serve as a platform for other, more peripherally associated AMPAR constituents, including CPT1C. Alone or in combination, these auxiliary subunits control the gating and pharmacology of the AMPAR complex and profoundly impact their biogenesis and protein processing (PubMed:30135643). Interacts with SACM1L; the interaction regulates SACM1L phosphatidylinositol-3-phosphatase activity and translocation to endoplasmic reticulum/trans Golgi network in a malonyl-CoA dependent manner (By similarity). Interacts with ATL1 (PubMed:25751282).</text>
</comment>
<comment type="subcellular location">
    <subcellularLocation>
        <location evidence="8">Cell projection</location>
        <location evidence="8">Dendrite</location>
    </subcellularLocation>
    <subcellularLocation>
        <location evidence="8">Cell projection</location>
        <location evidence="8">Axon</location>
    </subcellularLocation>
    <subcellularLocation>
        <location evidence="9">Endoplasmic reticulum membrane</location>
        <topology evidence="3">Multi-pass membrane protein</topology>
    </subcellularLocation>
    <text evidence="8">Localized in the soma and dendritic and axonal projections.</text>
</comment>
<comment type="alternative products">
    <event type="alternative splicing"/>
    <isoform>
        <id>Q8TCG5-1</id>
        <name>1</name>
        <sequence type="displayed"/>
    </isoform>
    <isoform>
        <id>Q8TCG5-2</id>
        <name>2</name>
        <sequence type="described" ref="VSP_010677"/>
    </isoform>
    <isoform>
        <id>Q8TCG5-3</id>
        <name>3</name>
        <sequence type="described" ref="VSP_012457"/>
    </isoform>
</comment>
<comment type="tissue specificity">
    <text evidence="5 8">Expressed predominantly in brain and testis. Expressed in motor neurons.</text>
</comment>
<comment type="domain">
    <text evidence="7">CPT1 enzymes are comprised of an N-terminal regulatory domain and a C-terminal catalytic domain that are separated by two transmembrane helices. In CPT1A, the regulatory domain, termed N, adopts a malonyl-CoA inhibitory and non-inhibitory state, Nalpha and Nbeta, respectively, which differ in their association with the catalytic domain. In CPT1C, the inhibitory Nalpha state is structurally homolog whereas the non-inhibitory Nbeta state is severely destabilized which probably contributes to the low catalytic activity of CPT1C relative to CPT1A and makes its association with the catalytic domain unlikely.</text>
</comment>
<comment type="disease" evidence="8">
    <disease id="DI-04364">
        <name>Spastic paraplegia 73, autosomal dominant</name>
        <acronym>SPG73</acronym>
        <description>A form of spastic paraplegia, a neurodegenerative disorder characterized by a slow, gradual, progressive weakness and spasticity of the lower limbs. Rate of progression and the severity of symptoms are quite variable. Initial symptoms may include difficulty with balance, weakness and stiffness in the legs, muscle spasms, and dragging the toes when walking. In some forms of the disorder, bladder symptoms (such as incontinence) may appear, or the weakness and stiffness may spread to other parts of the body.</description>
        <dbReference type="MIM" id="616282"/>
    </disease>
    <text>The disease is caused by variants affecting the gene represented in this entry.</text>
</comment>
<comment type="similarity">
    <text evidence="13">Belongs to the carnitine/choline acetyltransferase family.</text>
</comment>
<comment type="caution">
    <text evidence="5 9">In contrast to its paralogs, CPT1A and CPT1B, does not have, or at very low levels, carnitine O-palmitoyltransferase activity (EC:2.3.1.21) in vivo, being unable to catalyze the transfer of the acyl group of long-chain fatty acid-CoA conjugates onto carnitine. This is in agreement with its expression specific to neurons which is a cell-type that does not use fatty acids as fuel to any major extent and the fact that it locates to endoplasmic reticulum instead of mitochondria.</text>
</comment>
<comment type="sequence caution" evidence="13">
    <conflict type="erroneous initiation">
        <sequence resource="EMBL-CDS" id="BAB85068"/>
    </conflict>
    <text>Truncated N-terminus.</text>
</comment>
<comment type="sequence caution" evidence="13">
    <conflict type="erroneous initiation">
        <sequence resource="EMBL-CDS" id="CAD38561"/>
    </conflict>
    <text>Truncated N-terminus.</text>
</comment>
<feature type="chain" id="PRO_0000210166" description="Palmitoyl thioesterase CPT1C">
    <location>
        <begin position="1"/>
        <end position="803"/>
    </location>
</feature>
<feature type="topological domain" description="Cytoplasmic" evidence="3">
    <location>
        <begin position="1"/>
        <end position="52"/>
    </location>
</feature>
<feature type="transmembrane region" description="Helical" evidence="3">
    <location>
        <begin position="53"/>
        <end position="75"/>
    </location>
</feature>
<feature type="topological domain" description="Lumenal" evidence="3">
    <location>
        <begin position="76"/>
        <end position="103"/>
    </location>
</feature>
<feature type="transmembrane region" description="Helical" evidence="3">
    <location>
        <begin position="104"/>
        <end position="126"/>
    </location>
</feature>
<feature type="topological domain" description="Cytoplasmic" evidence="3">
    <location>
        <begin position="127"/>
        <end position="803"/>
    </location>
</feature>
<feature type="region of interest" description="Required for interaction with GRIA1" evidence="2">
    <location>
        <begin position="761"/>
        <end position="803"/>
    </location>
</feature>
<feature type="region of interest" description="Disordered" evidence="4">
    <location>
        <begin position="772"/>
        <end position="803"/>
    </location>
</feature>
<feature type="compositionally biased region" description="Polar residues" evidence="4">
    <location>
        <begin position="788"/>
        <end position="803"/>
    </location>
</feature>
<feature type="active site" description="Proton acceptor" evidence="9">
    <location>
        <position position="470"/>
    </location>
</feature>
<feature type="binding site" evidence="1">
    <location>
        <begin position="552"/>
        <end position="564"/>
    </location>
    <ligand>
        <name>CoA</name>
        <dbReference type="ChEBI" id="CHEBI:57287"/>
    </ligand>
</feature>
<feature type="binding site" evidence="1">
    <location>
        <position position="586"/>
    </location>
    <ligand>
        <name>(R)-carnitine</name>
        <dbReference type="ChEBI" id="CHEBI:16347"/>
    </ligand>
</feature>
<feature type="binding site" evidence="1">
    <location>
        <position position="588"/>
    </location>
    <ligand>
        <name>(R)-carnitine</name>
        <dbReference type="ChEBI" id="CHEBI:16347"/>
    </ligand>
</feature>
<feature type="binding site" evidence="1">
    <location>
        <position position="599"/>
    </location>
    <ligand>
        <name>(R)-carnitine</name>
        <dbReference type="ChEBI" id="CHEBI:16347"/>
    </ligand>
</feature>
<feature type="splice variant" id="VSP_010677" description="In isoform 2." evidence="11">
    <location>
        <begin position="258"/>
        <end position="268"/>
    </location>
</feature>
<feature type="splice variant" id="VSP_012457" description="In isoform 3." evidence="12">
    <location>
        <begin position="623"/>
        <end position="711"/>
    </location>
</feature>
<feature type="sequence variant" id="VAR_073433" description="In SPG73; alters protein conformation; dominant negative mutation; dbSNP:rs786204767." evidence="8">
    <original>R</original>
    <variation>C</variation>
    <location>
        <position position="37"/>
    </location>
</feature>
<feature type="mutagenesis site" description="Loss of palmitoyl thioesterase activity." evidence="9">
    <original>S</original>
    <variation>A</variation>
    <location>
        <position position="252"/>
    </location>
</feature>
<feature type="mutagenesis site" description="Loss of palmitoyl thioesterase activity. No effect on carnitine O-palmitoyltransferase inactivity." evidence="6 9">
    <original>H</original>
    <variation>A</variation>
    <location>
        <position position="470"/>
    </location>
</feature>
<feature type="mutagenesis site" description="Loss of palmitoyl thioesterase activity." evidence="9">
    <original>D</original>
    <variation>A</variation>
    <location>
        <position position="474"/>
    </location>
</feature>
<feature type="sequence conflict" description="In Ref. 3; BAF82402." evidence="13" ref="3">
    <original>S</original>
    <variation>G</variation>
    <location>
        <position position="58"/>
    </location>
</feature>
<feature type="sequence conflict" description="In Ref. 6; CAD38561." evidence="13" ref="6">
    <original>HEEH</original>
    <variation>RTRG</variation>
    <location>
        <begin position="375"/>
        <end position="378"/>
    </location>
</feature>
<feature type="sequence conflict" description="In Ref. 3; BAB85068." evidence="13" ref="3">
    <original>D</original>
    <variation>G</variation>
    <location>
        <position position="542"/>
    </location>
</feature>
<feature type="turn" evidence="16">
    <location>
        <begin position="13"/>
        <end position="15"/>
    </location>
</feature>
<feature type="helix" evidence="16">
    <location>
        <begin position="25"/>
        <end position="48"/>
    </location>
</feature>
<accession>Q8TCG5</accession>
<accession>A8K0Z8</accession>
<accession>Q5K6N5</accession>
<accession>Q8N6Q9</accession>
<accession>Q8NDS6</accession>
<accession>Q8TE84</accession>
<gene>
    <name evidence="14" type="primary">CPT1C</name>
    <name type="synonym">CATL1</name>
</gene>
<evidence type="ECO:0000250" key="1">
    <source>
        <dbReference type="UniProtKB" id="P18886"/>
    </source>
</evidence>
<evidence type="ECO:0000250" key="2">
    <source>
        <dbReference type="UniProtKB" id="Q8BGD5"/>
    </source>
</evidence>
<evidence type="ECO:0000255" key="3"/>
<evidence type="ECO:0000256" key="4">
    <source>
        <dbReference type="SAM" id="MobiDB-lite"/>
    </source>
</evidence>
<evidence type="ECO:0000269" key="5">
    <source>
    </source>
</evidence>
<evidence type="ECO:0000269" key="6">
    <source>
    </source>
</evidence>
<evidence type="ECO:0000269" key="7">
    <source>
    </source>
</evidence>
<evidence type="ECO:0000269" key="8">
    <source>
    </source>
</evidence>
<evidence type="ECO:0000269" key="9">
    <source>
    </source>
</evidence>
<evidence type="ECO:0000303" key="10">
    <source>
    </source>
</evidence>
<evidence type="ECO:0000303" key="11">
    <source>
    </source>
</evidence>
<evidence type="ECO:0000303" key="12">
    <source>
    </source>
</evidence>
<evidence type="ECO:0000305" key="13"/>
<evidence type="ECO:0000312" key="14">
    <source>
        <dbReference type="HGNC" id="HGNC:18540"/>
    </source>
</evidence>
<evidence type="ECO:0007744" key="15">
    <source>
        <dbReference type="PDB" id="2M76"/>
    </source>
</evidence>
<evidence type="ECO:0007829" key="16">
    <source>
        <dbReference type="PDB" id="2M76"/>
    </source>
</evidence>
<sequence length="803" mass="90989">MAEAHQAVGFRPSLTSDGAEVELSAPVLQEIYLSGLRSWKRHLSRFWNDFLTGVFPASPLSWLFLFSAIQLAWFLQLDPSLGLMEKIKELLPDWGGQHHGLRGVLAAALFASCLWGALIFTLHVALRLLLSYHGWLLEPHGAMSSPTKTWLALVRIFSGRHPMLFSYQRSLPRQPVPSVQDTVRKYLESVRPILSDEDFDWTAVLAQEFLRLQASLLQWYLRLKSWWASNYVSDWWEEFVYLRSRNPLMVNSNYYMMDFLYVTPTPLQAARAGNAVHALLLYRHRLNRQEIPPTLLMGMRPLCSAQYEKIFNTTRIPGVQKDYIRHLHDSQHVAVFHRGRFFRMGTHSRNSLLSPRALEQQFQRILDDPSPACPHEEHLAALTAAPRGTWAQVRTSLKTQAAEALEAVEGAAFFVSLDAEPAGLTREDPAASLDAYAHALLAGRGHDRWFDKSFTLIVFSNGKLGLSVEHSWADCPISGHMWEFTLATECFQLGYSTDGHCKGHPDPTLPQPQRLQWDLPDQIHSSISLALRGAKILSENVDCHVVPFSLFGKSFIRRCHLSSDSFIQIALQLAHFRDRGQFCLTYESAMTRLFLEGRTETVRSCTREACNFVRAMEDKEKTDPQCLALFRVAVDKHQALLKAAMSGQGVDRHLFALYIVSRFLHLQSPFLTQVHSEQWQLSTSQIPVQQMHLFDVHNYPDYVSSGGGFGPADDHGYGVSYIFMGDGMITFHISSKKSSTKTDSHRLGQHIEDALLDVASLFQAGQHFKRRFRGSGKENSRHRCGFLSRQTGASKASMTSTDF</sequence>
<keyword id="KW-0002">3D-structure</keyword>
<keyword id="KW-0012">Acyltransferase</keyword>
<keyword id="KW-0025">Alternative splicing</keyword>
<keyword id="KW-0966">Cell projection</keyword>
<keyword id="KW-0225">Disease variant</keyword>
<keyword id="KW-0256">Endoplasmic reticulum</keyword>
<keyword id="KW-0276">Fatty acid metabolism</keyword>
<keyword id="KW-0890">Hereditary spastic paraplegia</keyword>
<keyword id="KW-0378">Hydrolase</keyword>
<keyword id="KW-0443">Lipid metabolism</keyword>
<keyword id="KW-0472">Membrane</keyword>
<keyword id="KW-0523">Neurodegeneration</keyword>
<keyword id="KW-1267">Proteomics identification</keyword>
<keyword id="KW-1185">Reference proteome</keyword>
<keyword id="KW-0808">Transferase</keyword>
<keyword id="KW-0812">Transmembrane</keyword>
<keyword id="KW-1133">Transmembrane helix</keyword>
<organism>
    <name type="scientific">Homo sapiens</name>
    <name type="common">Human</name>
    <dbReference type="NCBI Taxonomy" id="9606"/>
    <lineage>
        <taxon>Eukaryota</taxon>
        <taxon>Metazoa</taxon>
        <taxon>Chordata</taxon>
        <taxon>Craniata</taxon>
        <taxon>Vertebrata</taxon>
        <taxon>Euteleostomi</taxon>
        <taxon>Mammalia</taxon>
        <taxon>Eutheria</taxon>
        <taxon>Euarchontoglires</taxon>
        <taxon>Primates</taxon>
        <taxon>Haplorrhini</taxon>
        <taxon>Catarrhini</taxon>
        <taxon>Hominidae</taxon>
        <taxon>Homo</taxon>
    </lineage>
</organism>
<reference key="1">
    <citation type="journal article" date="2002" name="Genomics">
        <title>A novel brain-expressed protein related to carnitine palmitoyltransferase I.</title>
        <authorList>
            <person name="Price N."/>
            <person name="van der Leij F.R."/>
            <person name="Jackson V."/>
            <person name="Corstorphine C."/>
            <person name="Thomson R."/>
            <person name="Sorensen A."/>
            <person name="Zammit V."/>
        </authorList>
    </citation>
    <scope>NUCLEOTIDE SEQUENCE [MRNA] (ISOFORM 1)</scope>
    <scope>TISSUE SPECIFICITY</scope>
    <source>
        <tissue>Eye</tissue>
    </source>
</reference>
<reference key="2">
    <citation type="submission" date="2000-12" db="EMBL/GenBank/DDBJ databases">
        <title>Molecular characterization, chromosomal localization and expression analysis of a gene, CATL1, encoding for a new member of the human carnitine acyltransferase family.</title>
        <authorList>
            <person name="Scorilas A."/>
            <person name="Katsaros N."/>
        </authorList>
    </citation>
    <scope>NUCLEOTIDE SEQUENCE [GENOMIC DNA]</scope>
</reference>
<reference key="3">
    <citation type="journal article" date="2004" name="Nat. Genet.">
        <title>Complete sequencing and characterization of 21,243 full-length human cDNAs.</title>
        <authorList>
            <person name="Ota T."/>
            <person name="Suzuki Y."/>
            <person name="Nishikawa T."/>
            <person name="Otsuki T."/>
            <person name="Sugiyama T."/>
            <person name="Irie R."/>
            <person name="Wakamatsu A."/>
            <person name="Hayashi K."/>
            <person name="Sato H."/>
            <person name="Nagai K."/>
            <person name="Kimura K."/>
            <person name="Makita H."/>
            <person name="Sekine M."/>
            <person name="Obayashi M."/>
            <person name="Nishi T."/>
            <person name="Shibahara T."/>
            <person name="Tanaka T."/>
            <person name="Ishii S."/>
            <person name="Yamamoto J."/>
            <person name="Saito K."/>
            <person name="Kawai Y."/>
            <person name="Isono Y."/>
            <person name="Nakamura Y."/>
            <person name="Nagahari K."/>
            <person name="Murakami K."/>
            <person name="Yasuda T."/>
            <person name="Iwayanagi T."/>
            <person name="Wagatsuma M."/>
            <person name="Shiratori A."/>
            <person name="Sudo H."/>
            <person name="Hosoiri T."/>
            <person name="Kaku Y."/>
            <person name="Kodaira H."/>
            <person name="Kondo H."/>
            <person name="Sugawara M."/>
            <person name="Takahashi M."/>
            <person name="Kanda K."/>
            <person name="Yokoi T."/>
            <person name="Furuya T."/>
            <person name="Kikkawa E."/>
            <person name="Omura Y."/>
            <person name="Abe K."/>
            <person name="Kamihara K."/>
            <person name="Katsuta N."/>
            <person name="Sato K."/>
            <person name="Tanikawa M."/>
            <person name="Yamazaki M."/>
            <person name="Ninomiya K."/>
            <person name="Ishibashi T."/>
            <person name="Yamashita H."/>
            <person name="Murakawa K."/>
            <person name="Fujimori K."/>
            <person name="Tanai H."/>
            <person name="Kimata M."/>
            <person name="Watanabe M."/>
            <person name="Hiraoka S."/>
            <person name="Chiba Y."/>
            <person name="Ishida S."/>
            <person name="Ono Y."/>
            <person name="Takiguchi S."/>
            <person name="Watanabe S."/>
            <person name="Yosida M."/>
            <person name="Hotuta T."/>
            <person name="Kusano J."/>
            <person name="Kanehori K."/>
            <person name="Takahashi-Fujii A."/>
            <person name="Hara H."/>
            <person name="Tanase T.-O."/>
            <person name="Nomura Y."/>
            <person name="Togiya S."/>
            <person name="Komai F."/>
            <person name="Hara R."/>
            <person name="Takeuchi K."/>
            <person name="Arita M."/>
            <person name="Imose N."/>
            <person name="Musashino K."/>
            <person name="Yuuki H."/>
            <person name="Oshima A."/>
            <person name="Sasaki N."/>
            <person name="Aotsuka S."/>
            <person name="Yoshikawa Y."/>
            <person name="Matsunawa H."/>
            <person name="Ichihara T."/>
            <person name="Shiohata N."/>
            <person name="Sano S."/>
            <person name="Moriya S."/>
            <person name="Momiyama H."/>
            <person name="Satoh N."/>
            <person name="Takami S."/>
            <person name="Terashima Y."/>
            <person name="Suzuki O."/>
            <person name="Nakagawa S."/>
            <person name="Senoh A."/>
            <person name="Mizoguchi H."/>
            <person name="Goto Y."/>
            <person name="Shimizu F."/>
            <person name="Wakebe H."/>
            <person name="Hishigaki H."/>
            <person name="Watanabe T."/>
            <person name="Sugiyama A."/>
            <person name="Takemoto M."/>
            <person name="Kawakami B."/>
            <person name="Yamazaki M."/>
            <person name="Watanabe K."/>
            <person name="Kumagai A."/>
            <person name="Itakura S."/>
            <person name="Fukuzumi Y."/>
            <person name="Fujimori Y."/>
            <person name="Komiyama M."/>
            <person name="Tashiro H."/>
            <person name="Tanigami A."/>
            <person name="Fujiwara T."/>
            <person name="Ono T."/>
            <person name="Yamada K."/>
            <person name="Fujii Y."/>
            <person name="Ozaki K."/>
            <person name="Hirao M."/>
            <person name="Ohmori Y."/>
            <person name="Kawabata A."/>
            <person name="Hikiji T."/>
            <person name="Kobatake N."/>
            <person name="Inagaki H."/>
            <person name="Ikema Y."/>
            <person name="Okamoto S."/>
            <person name="Okitani R."/>
            <person name="Kawakami T."/>
            <person name="Noguchi S."/>
            <person name="Itoh T."/>
            <person name="Shigeta K."/>
            <person name="Senba T."/>
            <person name="Matsumura K."/>
            <person name="Nakajima Y."/>
            <person name="Mizuno T."/>
            <person name="Morinaga M."/>
            <person name="Sasaki M."/>
            <person name="Togashi T."/>
            <person name="Oyama M."/>
            <person name="Hata H."/>
            <person name="Watanabe M."/>
            <person name="Komatsu T."/>
            <person name="Mizushima-Sugano J."/>
            <person name="Satoh T."/>
            <person name="Shirai Y."/>
            <person name="Takahashi Y."/>
            <person name="Nakagawa K."/>
            <person name="Okumura K."/>
            <person name="Nagase T."/>
            <person name="Nomura N."/>
            <person name="Kikuchi H."/>
            <person name="Masuho Y."/>
            <person name="Yamashita R."/>
            <person name="Nakai K."/>
            <person name="Yada T."/>
            <person name="Nakamura Y."/>
            <person name="Ohara O."/>
            <person name="Isogai T."/>
            <person name="Sugano S."/>
        </authorList>
    </citation>
    <scope>NUCLEOTIDE SEQUENCE [LARGE SCALE MRNA] (ISOFORM 1)</scope>
    <source>
        <tissue>Brain</tissue>
        <tissue>Kidney epithelium</tissue>
        <tissue>Subthalamic nucleus</tissue>
    </source>
</reference>
<reference key="4">
    <citation type="submission" date="2005-09" db="EMBL/GenBank/DDBJ databases">
        <authorList>
            <person name="Mural R.J."/>
            <person name="Istrail S."/>
            <person name="Sutton G.G."/>
            <person name="Florea L."/>
            <person name="Halpern A.L."/>
            <person name="Mobarry C.M."/>
            <person name="Lippert R."/>
            <person name="Walenz B."/>
            <person name="Shatkay H."/>
            <person name="Dew I."/>
            <person name="Miller J.R."/>
            <person name="Flanigan M.J."/>
            <person name="Edwards N.J."/>
            <person name="Bolanos R."/>
            <person name="Fasulo D."/>
            <person name="Halldorsson B.V."/>
            <person name="Hannenhalli S."/>
            <person name="Turner R."/>
            <person name="Yooseph S."/>
            <person name="Lu F."/>
            <person name="Nusskern D.R."/>
            <person name="Shue B.C."/>
            <person name="Zheng X.H."/>
            <person name="Zhong F."/>
            <person name="Delcher A.L."/>
            <person name="Huson D.H."/>
            <person name="Kravitz S.A."/>
            <person name="Mouchard L."/>
            <person name="Reinert K."/>
            <person name="Remington K.A."/>
            <person name="Clark A.G."/>
            <person name="Waterman M.S."/>
            <person name="Eichler E.E."/>
            <person name="Adams M.D."/>
            <person name="Hunkapiller M.W."/>
            <person name="Myers E.W."/>
            <person name="Venter J.C."/>
        </authorList>
    </citation>
    <scope>NUCLEOTIDE SEQUENCE [LARGE SCALE GENOMIC DNA]</scope>
</reference>
<reference key="5">
    <citation type="journal article" date="2004" name="Genome Res.">
        <title>The status, quality, and expansion of the NIH full-length cDNA project: the Mammalian Gene Collection (MGC).</title>
        <authorList>
            <consortium name="The MGC Project Team"/>
        </authorList>
    </citation>
    <scope>NUCLEOTIDE SEQUENCE [LARGE SCALE MRNA] (ISOFORM 2)</scope>
    <source>
        <tissue>Eye</tissue>
    </source>
</reference>
<reference key="6">
    <citation type="journal article" date="2007" name="BMC Genomics">
        <title>The full-ORF clone resource of the German cDNA consortium.</title>
        <authorList>
            <person name="Bechtel S."/>
            <person name="Rosenfelder H."/>
            <person name="Duda A."/>
            <person name="Schmidt C.P."/>
            <person name="Ernst U."/>
            <person name="Wellenreuther R."/>
            <person name="Mehrle A."/>
            <person name="Schuster C."/>
            <person name="Bahr A."/>
            <person name="Bloecker H."/>
            <person name="Heubner D."/>
            <person name="Hoerlein A."/>
            <person name="Michel G."/>
            <person name="Wedler H."/>
            <person name="Koehrer K."/>
            <person name="Ottenwaelder B."/>
            <person name="Poustka A."/>
            <person name="Wiemann S."/>
            <person name="Schupp I."/>
        </authorList>
    </citation>
    <scope>NUCLEOTIDE SEQUENCE [LARGE SCALE MRNA] OF 375-803 (ISOFORM 3)</scope>
    <source>
        <tissue>Brain</tissue>
    </source>
</reference>
<reference key="7">
    <citation type="journal article" date="2006" name="Proc. Natl. Acad. Sci. U.S.A.">
        <title>The brain-specific carnitine palmitoyltransferase-1c regulates energy homeostasis.</title>
        <authorList>
            <person name="Wolfgang M.J."/>
            <person name="Kurama T."/>
            <person name="Dai Y."/>
            <person name="Suwa A."/>
            <person name="Asaumi M."/>
            <person name="Matsumoto S."/>
            <person name="Cha S.H."/>
            <person name="Shimokawa T."/>
            <person name="Lane M.D."/>
        </authorList>
    </citation>
    <scope>FUNCTION</scope>
    <scope>CAUTION</scope>
    <scope>MUTAGENESIS OF HIS-470</scope>
    <scope>MALONYL-COA BINDING</scope>
</reference>
<reference key="8">
    <citation type="journal article" date="2016" name="Prog. Lipid Res.">
        <title>Carnitine palmitoyltransferase 1C: From cognition to cancer.</title>
        <authorList>
            <person name="Casals N."/>
            <person name="Zammit V."/>
            <person name="Herrero L."/>
            <person name="Fado R."/>
            <person name="Rodriguez-Rodriguez R."/>
            <person name="Serra D."/>
        </authorList>
    </citation>
    <scope>REVIEW OF FUNCTION</scope>
</reference>
<reference key="9">
    <citation type="journal article" date="2018" name="Front. Mol. Neurosci.">
        <title>Mechanisms of CPT1C-Dependent AMPAR Trafficking Enhancement.</title>
        <authorList>
            <person name="Gratacos-Batlle E."/>
            <person name="Olivella M."/>
            <person name="Sanchez-Fernandez N."/>
            <person name="Yefimenko N."/>
            <person name="Miguez-Cabello F."/>
            <person name="Fado R."/>
            <person name="Casals N."/>
            <person name="Gasull X."/>
            <person name="Ambrosio S."/>
            <person name="Soto D."/>
        </authorList>
    </citation>
    <scope>FUNCTION</scope>
    <scope>CATALYTIC ACTIVITY</scope>
    <scope>MUTAGENESIS OF SER-252; HIS-470 AND ASP-474</scope>
    <scope>SUBCELLULAR LOCATION</scope>
    <scope>INTERACTION WITH AMPAR COMPLEX</scope>
</reference>
<reference evidence="15" key="10">
    <citation type="journal article" date="2014" name="Biopolymers">
        <title>Structural characterization of the regulatory domain of brain carnitine palmitoyltransferase 1.</title>
        <authorList>
            <person name="Samanta S."/>
            <person name="Situ A.J."/>
            <person name="Ulmer T.S."/>
        </authorList>
    </citation>
    <scope>STRUCTURE BY NMR OF 1-50</scope>
    <scope>DOMAIN</scope>
</reference>
<reference key="11">
    <citation type="journal article" date="2015" name="JAMA Neurol.">
        <title>Mutation in CPT1C Associated with pure autosomal dominant spastic paraplegia.</title>
        <authorList>
            <person name="Rinaldi C."/>
            <person name="Schmidt T."/>
            <person name="Situ A.J."/>
            <person name="Johnson J.O."/>
            <person name="Lee P.R."/>
            <person name="Chen K.L."/>
            <person name="Bott L.C."/>
            <person name="Fado R."/>
            <person name="Harmison G.H."/>
            <person name="Parodi S."/>
            <person name="Grunseich C."/>
            <person name="Renvoise B."/>
            <person name="Biesecker L.G."/>
            <person name="De Michele G."/>
            <person name="Santorelli F.M."/>
            <person name="Filla A."/>
            <person name="Stevanin G."/>
            <person name="Duerr A."/>
            <person name="Brice A."/>
            <person name="Casals N."/>
            <person name="Traynor B.J."/>
            <person name="Blackstone C."/>
            <person name="Ulmer T.S."/>
            <person name="Fischbeck K.H."/>
        </authorList>
    </citation>
    <scope>INVOLVEMENT IN SPG73</scope>
    <scope>VARIANT SPG73 CYS-37</scope>
    <scope>CHARACTERIZATION OF VARIANT SPG73 CYS-37</scope>
    <scope>FUNCTION</scope>
    <scope>INTERACTION WITH ATL1</scope>
    <scope>SUBCELLULAR LOCATION</scope>
    <scope>TISSUE SPECIFICITY</scope>
</reference>
<reference key="12">
    <citation type="journal article" date="2015" name="JAMA Neurol.">
        <title>Typographical errors in figure.</title>
        <authorList>
            <person name="Rinaldi C."/>
            <person name="Schmidt T."/>
            <person name="Situ A.J."/>
            <person name="Johnson J.O."/>
            <person name="Lee P.R."/>
            <person name="Chen K.L."/>
            <person name="Bott L.C."/>
            <person name="Fado R."/>
            <person name="Harmison G.H."/>
            <person name="Parodi S."/>
            <person name="Grunseich C."/>
            <person name="Renvoise B."/>
            <person name="Biesecker L.G."/>
            <person name="De Michele G."/>
            <person name="Santorelli F.M."/>
            <person name="Filla A."/>
            <person name="Stevanin G."/>
            <person name="Duerr A."/>
            <person name="Brice A."/>
            <person name="Casals N."/>
            <person name="Traynor B.J."/>
            <person name="Blackstone C."/>
            <person name="Ulmer T.S."/>
            <person name="Fischbeck K.H."/>
        </authorList>
    </citation>
    <scope>ERRATUM OF PUBMED:25751282</scope>
</reference>
<proteinExistence type="evidence at protein level"/>